<gene>
    <name evidence="1" type="primary">ybeY</name>
    <name type="ordered locus">BAB1_2156</name>
</gene>
<comment type="function">
    <text evidence="1">Single strand-specific metallo-endoribonuclease involved in late-stage 70S ribosome quality control and in maturation of the 3' terminus of the 16S rRNA.</text>
</comment>
<comment type="cofactor">
    <cofactor evidence="1">
        <name>Zn(2+)</name>
        <dbReference type="ChEBI" id="CHEBI:29105"/>
    </cofactor>
    <text evidence="1">Binds 1 zinc ion.</text>
</comment>
<comment type="subcellular location">
    <subcellularLocation>
        <location evidence="1">Cytoplasm</location>
    </subcellularLocation>
</comment>
<comment type="similarity">
    <text evidence="1">Belongs to the endoribonuclease YbeY family.</text>
</comment>
<comment type="sequence caution" evidence="2">
    <conflict type="erroneous initiation">
        <sequence resource="EMBL-CDS" id="CAJ12112"/>
    </conflict>
</comment>
<organism>
    <name type="scientific">Brucella abortus (strain 2308)</name>
    <dbReference type="NCBI Taxonomy" id="359391"/>
    <lineage>
        <taxon>Bacteria</taxon>
        <taxon>Pseudomonadati</taxon>
        <taxon>Pseudomonadota</taxon>
        <taxon>Alphaproteobacteria</taxon>
        <taxon>Hyphomicrobiales</taxon>
        <taxon>Brucellaceae</taxon>
        <taxon>Brucella/Ochrobactrum group</taxon>
        <taxon>Brucella</taxon>
    </lineage>
</organism>
<reference key="1">
    <citation type="journal article" date="2005" name="Infect. Immun.">
        <title>Whole-genome analyses of speciation events in pathogenic Brucellae.</title>
        <authorList>
            <person name="Chain P.S."/>
            <person name="Comerci D.J."/>
            <person name="Tolmasky M.E."/>
            <person name="Larimer F.W."/>
            <person name="Malfatti S.A."/>
            <person name="Vergez L.M."/>
            <person name="Aguero F."/>
            <person name="Land M.L."/>
            <person name="Ugalde R.A."/>
            <person name="Garcia E."/>
        </authorList>
    </citation>
    <scope>NUCLEOTIDE SEQUENCE [LARGE SCALE GENOMIC DNA]</scope>
    <source>
        <strain>2308</strain>
    </source>
</reference>
<proteinExistence type="inferred from homology"/>
<sequence length="168" mass="18423">MSDNAIHIDIMIEAGNWPDEASLESLVSKSVAAAWNNLGLKSATSELSVVFTDDASIQLLNGEWRGKDKPTNVLSFPAFPVKAGSQPGPMLGDIVIARETVEREAKEEGKPIENHLSHLVVHGFLHLLGYDHETDEEAEVMEAREREILHALAIPDPYAVSDEDINND</sequence>
<feature type="chain" id="PRO_0000284170" description="Endoribonuclease YbeY">
    <location>
        <begin position="1"/>
        <end position="168"/>
    </location>
</feature>
<feature type="binding site" evidence="1">
    <location>
        <position position="122"/>
    </location>
    <ligand>
        <name>Zn(2+)</name>
        <dbReference type="ChEBI" id="CHEBI:29105"/>
        <note>catalytic</note>
    </ligand>
</feature>
<feature type="binding site" evidence="1">
    <location>
        <position position="126"/>
    </location>
    <ligand>
        <name>Zn(2+)</name>
        <dbReference type="ChEBI" id="CHEBI:29105"/>
        <note>catalytic</note>
    </ligand>
</feature>
<feature type="binding site" evidence="1">
    <location>
        <position position="132"/>
    </location>
    <ligand>
        <name>Zn(2+)</name>
        <dbReference type="ChEBI" id="CHEBI:29105"/>
        <note>catalytic</note>
    </ligand>
</feature>
<keyword id="KW-0963">Cytoplasm</keyword>
<keyword id="KW-0255">Endonuclease</keyword>
<keyword id="KW-0378">Hydrolase</keyword>
<keyword id="KW-0479">Metal-binding</keyword>
<keyword id="KW-0540">Nuclease</keyword>
<keyword id="KW-1185">Reference proteome</keyword>
<keyword id="KW-0690">Ribosome biogenesis</keyword>
<keyword id="KW-0698">rRNA processing</keyword>
<keyword id="KW-0862">Zinc</keyword>
<evidence type="ECO:0000255" key="1">
    <source>
        <dbReference type="HAMAP-Rule" id="MF_00009"/>
    </source>
</evidence>
<evidence type="ECO:0000305" key="2"/>
<dbReference type="EC" id="3.1.-.-" evidence="1"/>
<dbReference type="EMBL" id="AM040264">
    <property type="protein sequence ID" value="CAJ12112.1"/>
    <property type="status" value="ALT_INIT"/>
    <property type="molecule type" value="Genomic_DNA"/>
</dbReference>
<dbReference type="SMR" id="Q2YQS6"/>
<dbReference type="STRING" id="359391.BAB1_2156"/>
<dbReference type="KEGG" id="bmf:BAB1_2156"/>
<dbReference type="HOGENOM" id="CLU_106710_0_0_5"/>
<dbReference type="PhylomeDB" id="Q2YQS6"/>
<dbReference type="PHI-base" id="PHI:9125"/>
<dbReference type="Proteomes" id="UP000002719">
    <property type="component" value="Chromosome I"/>
</dbReference>
<dbReference type="GO" id="GO:0005737">
    <property type="term" value="C:cytoplasm"/>
    <property type="evidence" value="ECO:0007669"/>
    <property type="project" value="UniProtKB-SubCell"/>
</dbReference>
<dbReference type="GO" id="GO:0004222">
    <property type="term" value="F:metalloendopeptidase activity"/>
    <property type="evidence" value="ECO:0007669"/>
    <property type="project" value="InterPro"/>
</dbReference>
<dbReference type="GO" id="GO:0004521">
    <property type="term" value="F:RNA endonuclease activity"/>
    <property type="evidence" value="ECO:0007669"/>
    <property type="project" value="UniProtKB-UniRule"/>
</dbReference>
<dbReference type="GO" id="GO:0008270">
    <property type="term" value="F:zinc ion binding"/>
    <property type="evidence" value="ECO:0007669"/>
    <property type="project" value="UniProtKB-UniRule"/>
</dbReference>
<dbReference type="GO" id="GO:0006364">
    <property type="term" value="P:rRNA processing"/>
    <property type="evidence" value="ECO:0007669"/>
    <property type="project" value="UniProtKB-UniRule"/>
</dbReference>
<dbReference type="Gene3D" id="3.40.390.30">
    <property type="entry name" value="Metalloproteases ('zincins'), catalytic domain"/>
    <property type="match status" value="1"/>
</dbReference>
<dbReference type="HAMAP" id="MF_00009">
    <property type="entry name" value="Endoribonucl_YbeY"/>
    <property type="match status" value="1"/>
</dbReference>
<dbReference type="InterPro" id="IPR023091">
    <property type="entry name" value="MetalPrtase_cat_dom_sf_prd"/>
</dbReference>
<dbReference type="InterPro" id="IPR002036">
    <property type="entry name" value="YbeY"/>
</dbReference>
<dbReference type="InterPro" id="IPR020549">
    <property type="entry name" value="YbeY_CS"/>
</dbReference>
<dbReference type="NCBIfam" id="TIGR00043">
    <property type="entry name" value="rRNA maturation RNase YbeY"/>
    <property type="match status" value="1"/>
</dbReference>
<dbReference type="PANTHER" id="PTHR46986">
    <property type="entry name" value="ENDORIBONUCLEASE YBEY, CHLOROPLASTIC"/>
    <property type="match status" value="1"/>
</dbReference>
<dbReference type="PANTHER" id="PTHR46986:SF1">
    <property type="entry name" value="ENDORIBONUCLEASE YBEY, CHLOROPLASTIC"/>
    <property type="match status" value="1"/>
</dbReference>
<dbReference type="Pfam" id="PF02130">
    <property type="entry name" value="YbeY"/>
    <property type="match status" value="1"/>
</dbReference>
<dbReference type="SUPFAM" id="SSF55486">
    <property type="entry name" value="Metalloproteases ('zincins'), catalytic domain"/>
    <property type="match status" value="1"/>
</dbReference>
<dbReference type="PROSITE" id="PS01306">
    <property type="entry name" value="UPF0054"/>
    <property type="match status" value="1"/>
</dbReference>
<protein>
    <recommendedName>
        <fullName evidence="1">Endoribonuclease YbeY</fullName>
        <ecNumber evidence="1">3.1.-.-</ecNumber>
    </recommendedName>
</protein>
<accession>Q2YQS6</accession>
<name>YBEY_BRUA2</name>